<gene>
    <name evidence="1" type="primary">serS</name>
    <name type="ordered locus">SO_2310</name>
</gene>
<comment type="function">
    <text evidence="1">Catalyzes the attachment of serine to tRNA(Ser). Is also able to aminoacylate tRNA(Sec) with serine, to form the misacylated tRNA L-seryl-tRNA(Sec), which will be further converted into selenocysteinyl-tRNA(Sec).</text>
</comment>
<comment type="catalytic activity">
    <reaction evidence="1">
        <text>tRNA(Ser) + L-serine + ATP = L-seryl-tRNA(Ser) + AMP + diphosphate + H(+)</text>
        <dbReference type="Rhea" id="RHEA:12292"/>
        <dbReference type="Rhea" id="RHEA-COMP:9669"/>
        <dbReference type="Rhea" id="RHEA-COMP:9703"/>
        <dbReference type="ChEBI" id="CHEBI:15378"/>
        <dbReference type="ChEBI" id="CHEBI:30616"/>
        <dbReference type="ChEBI" id="CHEBI:33019"/>
        <dbReference type="ChEBI" id="CHEBI:33384"/>
        <dbReference type="ChEBI" id="CHEBI:78442"/>
        <dbReference type="ChEBI" id="CHEBI:78533"/>
        <dbReference type="ChEBI" id="CHEBI:456215"/>
        <dbReference type="EC" id="6.1.1.11"/>
    </reaction>
</comment>
<comment type="catalytic activity">
    <reaction evidence="1">
        <text>tRNA(Sec) + L-serine + ATP = L-seryl-tRNA(Sec) + AMP + diphosphate + H(+)</text>
        <dbReference type="Rhea" id="RHEA:42580"/>
        <dbReference type="Rhea" id="RHEA-COMP:9742"/>
        <dbReference type="Rhea" id="RHEA-COMP:10128"/>
        <dbReference type="ChEBI" id="CHEBI:15378"/>
        <dbReference type="ChEBI" id="CHEBI:30616"/>
        <dbReference type="ChEBI" id="CHEBI:33019"/>
        <dbReference type="ChEBI" id="CHEBI:33384"/>
        <dbReference type="ChEBI" id="CHEBI:78442"/>
        <dbReference type="ChEBI" id="CHEBI:78533"/>
        <dbReference type="ChEBI" id="CHEBI:456215"/>
        <dbReference type="EC" id="6.1.1.11"/>
    </reaction>
</comment>
<comment type="pathway">
    <text evidence="1">Aminoacyl-tRNA biosynthesis; selenocysteinyl-tRNA(Sec) biosynthesis; L-seryl-tRNA(Sec) from L-serine and tRNA(Sec): step 1/1.</text>
</comment>
<comment type="subunit">
    <text evidence="1">Homodimer. The tRNA molecule binds across the dimer.</text>
</comment>
<comment type="subcellular location">
    <subcellularLocation>
        <location evidence="1">Cytoplasm</location>
    </subcellularLocation>
</comment>
<comment type="domain">
    <text evidence="1">Consists of two distinct domains, a catalytic core and a N-terminal extension that is involved in tRNA binding.</text>
</comment>
<comment type="similarity">
    <text evidence="1">Belongs to the class-II aminoacyl-tRNA synthetase family. Type-1 seryl-tRNA synthetase subfamily.</text>
</comment>
<feature type="chain" id="PRO_0000122115" description="Serine--tRNA ligase">
    <location>
        <begin position="1"/>
        <end position="428"/>
    </location>
</feature>
<feature type="binding site" evidence="1">
    <location>
        <begin position="235"/>
        <end position="237"/>
    </location>
    <ligand>
        <name>L-serine</name>
        <dbReference type="ChEBI" id="CHEBI:33384"/>
    </ligand>
</feature>
<feature type="binding site" evidence="1">
    <location>
        <begin position="266"/>
        <end position="268"/>
    </location>
    <ligand>
        <name>ATP</name>
        <dbReference type="ChEBI" id="CHEBI:30616"/>
    </ligand>
</feature>
<feature type="binding site" evidence="1">
    <location>
        <position position="289"/>
    </location>
    <ligand>
        <name>L-serine</name>
        <dbReference type="ChEBI" id="CHEBI:33384"/>
    </ligand>
</feature>
<feature type="binding site" evidence="1">
    <location>
        <begin position="353"/>
        <end position="356"/>
    </location>
    <ligand>
        <name>ATP</name>
        <dbReference type="ChEBI" id="CHEBI:30616"/>
    </ligand>
</feature>
<feature type="binding site" evidence="1">
    <location>
        <position position="389"/>
    </location>
    <ligand>
        <name>L-serine</name>
        <dbReference type="ChEBI" id="CHEBI:33384"/>
    </ligand>
</feature>
<sequence length="428" mass="46883">MLDPKFLRNELAVTAERLATRGFILDVAHLTQLEEKRKSLQVATEELQASRNAISKSIGQAKARGEDVDAIMAQVGDLGAQLDAKKVELAAVLEEVNAIAMSMPNLPDESAPIGADETENVEVRRWGSPRSFDFPIKDHIDLGEGLNGLDFKSAVKITGSRFIVMKGQIARLNRALGQFMLDLHTTEHGYTEAYVPLLVNEASLLGTGQLPKFGEDLFHTKPATEEGQGLSLIPTAEVPLTNLVRDSIVDEDELPIKLTAHTACFRSEAGSYGKDTRGLIRQHQFDKVELVQLVKPEDSMAALEVLTGHAETVLQRLGLPYRTVVLCTGDMGFGSSKTYDIEVWLPGQNTYREISSCSNMKDFQARRMQARYRVKADNKPVLLHTLNGSGLAVGRTLVAILENYQNADGSVTVPEALRPYMGGLTQIG</sequence>
<dbReference type="EC" id="6.1.1.11" evidence="1"/>
<dbReference type="EMBL" id="AE014299">
    <property type="protein sequence ID" value="AAN55349.1"/>
    <property type="molecule type" value="Genomic_DNA"/>
</dbReference>
<dbReference type="RefSeq" id="NP_717905.1">
    <property type="nucleotide sequence ID" value="NC_004347.2"/>
</dbReference>
<dbReference type="RefSeq" id="WP_011072310.1">
    <property type="nucleotide sequence ID" value="NC_004347.2"/>
</dbReference>
<dbReference type="SMR" id="Q8EEQ9"/>
<dbReference type="STRING" id="211586.SO_2310"/>
<dbReference type="PaxDb" id="211586-SO_2310"/>
<dbReference type="KEGG" id="son:SO_2310"/>
<dbReference type="PATRIC" id="fig|211586.12.peg.2225"/>
<dbReference type="eggNOG" id="COG0172">
    <property type="taxonomic scope" value="Bacteria"/>
</dbReference>
<dbReference type="HOGENOM" id="CLU_023797_1_1_6"/>
<dbReference type="OrthoDB" id="9804647at2"/>
<dbReference type="PhylomeDB" id="Q8EEQ9"/>
<dbReference type="BioCyc" id="SONE211586:G1GMP-2112-MONOMER"/>
<dbReference type="UniPathway" id="UPA00906">
    <property type="reaction ID" value="UER00895"/>
</dbReference>
<dbReference type="Proteomes" id="UP000008186">
    <property type="component" value="Chromosome"/>
</dbReference>
<dbReference type="GO" id="GO:0005737">
    <property type="term" value="C:cytoplasm"/>
    <property type="evidence" value="ECO:0007669"/>
    <property type="project" value="UniProtKB-SubCell"/>
</dbReference>
<dbReference type="GO" id="GO:0005524">
    <property type="term" value="F:ATP binding"/>
    <property type="evidence" value="ECO:0007669"/>
    <property type="project" value="UniProtKB-UniRule"/>
</dbReference>
<dbReference type="GO" id="GO:0004828">
    <property type="term" value="F:serine-tRNA ligase activity"/>
    <property type="evidence" value="ECO:0007669"/>
    <property type="project" value="UniProtKB-UniRule"/>
</dbReference>
<dbReference type="GO" id="GO:0016260">
    <property type="term" value="P:selenocysteine biosynthetic process"/>
    <property type="evidence" value="ECO:0007669"/>
    <property type="project" value="UniProtKB-UniRule"/>
</dbReference>
<dbReference type="GO" id="GO:0006434">
    <property type="term" value="P:seryl-tRNA aminoacylation"/>
    <property type="evidence" value="ECO:0007669"/>
    <property type="project" value="UniProtKB-UniRule"/>
</dbReference>
<dbReference type="CDD" id="cd00770">
    <property type="entry name" value="SerRS_core"/>
    <property type="match status" value="1"/>
</dbReference>
<dbReference type="Gene3D" id="3.30.930.10">
    <property type="entry name" value="Bira Bifunctional Protein, Domain 2"/>
    <property type="match status" value="1"/>
</dbReference>
<dbReference type="Gene3D" id="1.10.287.40">
    <property type="entry name" value="Serine-tRNA synthetase, tRNA binding domain"/>
    <property type="match status" value="1"/>
</dbReference>
<dbReference type="HAMAP" id="MF_00176">
    <property type="entry name" value="Ser_tRNA_synth_type1"/>
    <property type="match status" value="1"/>
</dbReference>
<dbReference type="InterPro" id="IPR002314">
    <property type="entry name" value="aa-tRNA-synt_IIb"/>
</dbReference>
<dbReference type="InterPro" id="IPR006195">
    <property type="entry name" value="aa-tRNA-synth_II"/>
</dbReference>
<dbReference type="InterPro" id="IPR045864">
    <property type="entry name" value="aa-tRNA-synth_II/BPL/LPL"/>
</dbReference>
<dbReference type="InterPro" id="IPR002317">
    <property type="entry name" value="Ser-tRNA-ligase_type_1"/>
</dbReference>
<dbReference type="InterPro" id="IPR015866">
    <property type="entry name" value="Ser-tRNA-synth_1_N"/>
</dbReference>
<dbReference type="InterPro" id="IPR042103">
    <property type="entry name" value="SerRS_1_N_sf"/>
</dbReference>
<dbReference type="InterPro" id="IPR033729">
    <property type="entry name" value="SerRS_core"/>
</dbReference>
<dbReference type="InterPro" id="IPR010978">
    <property type="entry name" value="tRNA-bd_arm"/>
</dbReference>
<dbReference type="NCBIfam" id="TIGR00414">
    <property type="entry name" value="serS"/>
    <property type="match status" value="1"/>
</dbReference>
<dbReference type="PANTHER" id="PTHR43697:SF1">
    <property type="entry name" value="SERINE--TRNA LIGASE"/>
    <property type="match status" value="1"/>
</dbReference>
<dbReference type="PANTHER" id="PTHR43697">
    <property type="entry name" value="SERYL-TRNA SYNTHETASE"/>
    <property type="match status" value="1"/>
</dbReference>
<dbReference type="Pfam" id="PF02403">
    <property type="entry name" value="Seryl_tRNA_N"/>
    <property type="match status" value="1"/>
</dbReference>
<dbReference type="Pfam" id="PF00587">
    <property type="entry name" value="tRNA-synt_2b"/>
    <property type="match status" value="1"/>
</dbReference>
<dbReference type="PIRSF" id="PIRSF001529">
    <property type="entry name" value="Ser-tRNA-synth_IIa"/>
    <property type="match status" value="1"/>
</dbReference>
<dbReference type="PRINTS" id="PR00981">
    <property type="entry name" value="TRNASYNTHSER"/>
</dbReference>
<dbReference type="SUPFAM" id="SSF55681">
    <property type="entry name" value="Class II aaRS and biotin synthetases"/>
    <property type="match status" value="1"/>
</dbReference>
<dbReference type="SUPFAM" id="SSF46589">
    <property type="entry name" value="tRNA-binding arm"/>
    <property type="match status" value="1"/>
</dbReference>
<dbReference type="PROSITE" id="PS50862">
    <property type="entry name" value="AA_TRNA_LIGASE_II"/>
    <property type="match status" value="1"/>
</dbReference>
<evidence type="ECO:0000255" key="1">
    <source>
        <dbReference type="HAMAP-Rule" id="MF_00176"/>
    </source>
</evidence>
<reference key="1">
    <citation type="journal article" date="2002" name="Nat. Biotechnol.">
        <title>Genome sequence of the dissimilatory metal ion-reducing bacterium Shewanella oneidensis.</title>
        <authorList>
            <person name="Heidelberg J.F."/>
            <person name="Paulsen I.T."/>
            <person name="Nelson K.E."/>
            <person name="Gaidos E.J."/>
            <person name="Nelson W.C."/>
            <person name="Read T.D."/>
            <person name="Eisen J.A."/>
            <person name="Seshadri R."/>
            <person name="Ward N.L."/>
            <person name="Methe B.A."/>
            <person name="Clayton R.A."/>
            <person name="Meyer T."/>
            <person name="Tsapin A."/>
            <person name="Scott J."/>
            <person name="Beanan M.J."/>
            <person name="Brinkac L.M."/>
            <person name="Daugherty S.C."/>
            <person name="DeBoy R.T."/>
            <person name="Dodson R.J."/>
            <person name="Durkin A.S."/>
            <person name="Haft D.H."/>
            <person name="Kolonay J.F."/>
            <person name="Madupu R."/>
            <person name="Peterson J.D."/>
            <person name="Umayam L.A."/>
            <person name="White O."/>
            <person name="Wolf A.M."/>
            <person name="Vamathevan J.J."/>
            <person name="Weidman J.F."/>
            <person name="Impraim M."/>
            <person name="Lee K."/>
            <person name="Berry K.J."/>
            <person name="Lee C."/>
            <person name="Mueller J."/>
            <person name="Khouri H.M."/>
            <person name="Gill J."/>
            <person name="Utterback T.R."/>
            <person name="McDonald L.A."/>
            <person name="Feldblyum T.V."/>
            <person name="Smith H.O."/>
            <person name="Venter J.C."/>
            <person name="Nealson K.H."/>
            <person name="Fraser C.M."/>
        </authorList>
    </citation>
    <scope>NUCLEOTIDE SEQUENCE [LARGE SCALE GENOMIC DNA]</scope>
    <source>
        <strain>ATCC 700550 / JCM 31522 / CIP 106686 / LMG 19005 / NCIMB 14063 / MR-1</strain>
    </source>
</reference>
<organism>
    <name type="scientific">Shewanella oneidensis (strain ATCC 700550 / JCM 31522 / CIP 106686 / LMG 19005 / NCIMB 14063 / MR-1)</name>
    <dbReference type="NCBI Taxonomy" id="211586"/>
    <lineage>
        <taxon>Bacteria</taxon>
        <taxon>Pseudomonadati</taxon>
        <taxon>Pseudomonadota</taxon>
        <taxon>Gammaproteobacteria</taxon>
        <taxon>Alteromonadales</taxon>
        <taxon>Shewanellaceae</taxon>
        <taxon>Shewanella</taxon>
    </lineage>
</organism>
<name>SYS_SHEON</name>
<accession>Q8EEQ9</accession>
<keyword id="KW-0030">Aminoacyl-tRNA synthetase</keyword>
<keyword id="KW-0067">ATP-binding</keyword>
<keyword id="KW-0963">Cytoplasm</keyword>
<keyword id="KW-0436">Ligase</keyword>
<keyword id="KW-0547">Nucleotide-binding</keyword>
<keyword id="KW-0648">Protein biosynthesis</keyword>
<keyword id="KW-1185">Reference proteome</keyword>
<proteinExistence type="inferred from homology"/>
<protein>
    <recommendedName>
        <fullName evidence="1">Serine--tRNA ligase</fullName>
        <ecNumber evidence="1">6.1.1.11</ecNumber>
    </recommendedName>
    <alternativeName>
        <fullName evidence="1">Seryl-tRNA synthetase</fullName>
        <shortName evidence="1">SerRS</shortName>
    </alternativeName>
    <alternativeName>
        <fullName evidence="1">Seryl-tRNA(Ser/Sec) synthetase</fullName>
    </alternativeName>
</protein>